<feature type="chain" id="PRO_0000089130" description="Actin-like protein ARP10">
    <location>
        <begin position="1"/>
        <end position="284"/>
    </location>
</feature>
<name>ARP10_YEAST</name>
<comment type="function">
    <text evidence="1 2">Pointed-end-associated component of the dynactin complex which assists cytoplasmic dynein by increasing its processivity and by regulation of its cargo binding (By similarity). The dynactin complex is required for the spindle translocation late in anaphase and is involved in a cell wall synthesis checkpoint. May regulate the association of the dynactin complex with the plasma membrane.</text>
</comment>
<comment type="subunit">
    <text evidence="1 2">Self-associates. Component of the dynactin complex composed of at least ARP1, JNM1, NIP100 and ARP10. Dynactin comprises a short rod of the ARP1 filament attached to ARP10 at its pointed-end and probably associated with the capping protein at its barbed-end. The rod is implicated in dynein cargo binding. A sidearm formed by NIP100 projects from the ARP1 filament and is implicated in motor binding (By similarity). Interacts with ARP1 and JNM1.</text>
</comment>
<comment type="interaction">
    <interactant intactId="EBI-2977">
        <id>Q04549</id>
    </interactant>
    <interactant intactId="EBI-2920">
        <id>P38696</id>
        <label>ARP1</label>
    </interactant>
    <organismsDiffer>false</organismsDiffer>
    <experiments>5</experiments>
</comment>
<comment type="interaction">
    <interactant intactId="EBI-2977">
        <id>Q04549</id>
    </interactant>
    <interactant intactId="EBI-9415">
        <id>P36224</id>
        <label>JNM1</label>
    </interactant>
    <organismsDiffer>false</organismsDiffer>
    <experiments>3</experiments>
</comment>
<comment type="subcellular location">
    <subcellularLocation>
        <location evidence="3">Cytoplasm</location>
        <location evidence="3">Cytoskeleton</location>
    </subcellularLocation>
</comment>
<comment type="similarity">
    <text evidence="3">Belongs to the actin family. ARP10 subfamily.</text>
</comment>
<organism>
    <name type="scientific">Saccharomyces cerevisiae (strain ATCC 204508 / S288c)</name>
    <name type="common">Baker's yeast</name>
    <dbReference type="NCBI Taxonomy" id="559292"/>
    <lineage>
        <taxon>Eukaryota</taxon>
        <taxon>Fungi</taxon>
        <taxon>Dikarya</taxon>
        <taxon>Ascomycota</taxon>
        <taxon>Saccharomycotina</taxon>
        <taxon>Saccharomycetes</taxon>
        <taxon>Saccharomycetales</taxon>
        <taxon>Saccharomycetaceae</taxon>
        <taxon>Saccharomyces</taxon>
    </lineage>
</organism>
<dbReference type="EMBL" id="Z48758">
    <property type="protein sequence ID" value="CAA88660.1"/>
    <property type="molecule type" value="Genomic_DNA"/>
</dbReference>
<dbReference type="EMBL" id="Z47746">
    <property type="protein sequence ID" value="CAA87682.1"/>
    <property type="molecule type" value="Genomic_DNA"/>
</dbReference>
<dbReference type="EMBL" id="AY557682">
    <property type="protein sequence ID" value="AAS56008.1"/>
    <property type="molecule type" value="Genomic_DNA"/>
</dbReference>
<dbReference type="EMBL" id="BK006938">
    <property type="protein sequence ID" value="DAA11952.1"/>
    <property type="molecule type" value="Genomic_DNA"/>
</dbReference>
<dbReference type="PIR" id="S52672">
    <property type="entry name" value="S52672"/>
</dbReference>
<dbReference type="RefSeq" id="NP_010391.1">
    <property type="nucleotide sequence ID" value="NM_001180414.1"/>
</dbReference>
<dbReference type="SMR" id="Q04549"/>
<dbReference type="BioGRID" id="32163">
    <property type="interactions" value="78"/>
</dbReference>
<dbReference type="ComplexPortal" id="CPX-1805">
    <property type="entry name" value="Dynactin complex"/>
</dbReference>
<dbReference type="DIP" id="DIP-1204N"/>
<dbReference type="FunCoup" id="Q04549">
    <property type="interactions" value="73"/>
</dbReference>
<dbReference type="IntAct" id="Q04549">
    <property type="interactions" value="5"/>
</dbReference>
<dbReference type="MINT" id="Q04549"/>
<dbReference type="STRING" id="4932.YDR106W"/>
<dbReference type="PaxDb" id="4932-YDR106W"/>
<dbReference type="PeptideAtlas" id="Q04549"/>
<dbReference type="EnsemblFungi" id="YDR106W_mRNA">
    <property type="protein sequence ID" value="YDR106W"/>
    <property type="gene ID" value="YDR106W"/>
</dbReference>
<dbReference type="GeneID" id="851683"/>
<dbReference type="KEGG" id="sce:YDR106W"/>
<dbReference type="AGR" id="SGD:S000002513"/>
<dbReference type="SGD" id="S000002513">
    <property type="gene designation" value="ARP10"/>
</dbReference>
<dbReference type="VEuPathDB" id="FungiDB:YDR106W"/>
<dbReference type="eggNOG" id="ENOG502S8RP">
    <property type="taxonomic scope" value="Eukaryota"/>
</dbReference>
<dbReference type="HOGENOM" id="CLU_085474_0_0_1"/>
<dbReference type="InParanoid" id="Q04549"/>
<dbReference type="OMA" id="HIAPDWF"/>
<dbReference type="OrthoDB" id="337660at2759"/>
<dbReference type="BioCyc" id="YEAST:G3O-29708-MONOMER"/>
<dbReference type="BioGRID-ORCS" id="851683">
    <property type="hits" value="5 hits in 10 CRISPR screens"/>
</dbReference>
<dbReference type="PRO" id="PR:Q04549"/>
<dbReference type="Proteomes" id="UP000002311">
    <property type="component" value="Chromosome IV"/>
</dbReference>
<dbReference type="RNAct" id="Q04549">
    <property type="molecule type" value="protein"/>
</dbReference>
<dbReference type="GO" id="GO:0015629">
    <property type="term" value="C:actin cytoskeleton"/>
    <property type="evidence" value="ECO:0000303"/>
    <property type="project" value="ComplexPortal"/>
</dbReference>
<dbReference type="GO" id="GO:0005737">
    <property type="term" value="C:cytoplasm"/>
    <property type="evidence" value="ECO:0000314"/>
    <property type="project" value="SGD"/>
</dbReference>
<dbReference type="GO" id="GO:0005869">
    <property type="term" value="C:dynactin complex"/>
    <property type="evidence" value="ECO:0000353"/>
    <property type="project" value="SGD"/>
</dbReference>
<dbReference type="GO" id="GO:0030286">
    <property type="term" value="C:dynein complex"/>
    <property type="evidence" value="ECO:0007669"/>
    <property type="project" value="UniProtKB-KW"/>
</dbReference>
<dbReference type="GO" id="GO:0005874">
    <property type="term" value="C:microtubule"/>
    <property type="evidence" value="ECO:0007669"/>
    <property type="project" value="UniProtKB-KW"/>
</dbReference>
<dbReference type="GO" id="GO:0000812">
    <property type="term" value="C:Swr1 complex"/>
    <property type="evidence" value="ECO:0000318"/>
    <property type="project" value="GO_Central"/>
</dbReference>
<dbReference type="GO" id="GO:0031491">
    <property type="term" value="F:nucleosome binding"/>
    <property type="evidence" value="ECO:0000318"/>
    <property type="project" value="GO_Central"/>
</dbReference>
<dbReference type="GO" id="GO:0005200">
    <property type="term" value="F:structural constituent of cytoskeleton"/>
    <property type="evidence" value="ECO:0000353"/>
    <property type="project" value="SGD"/>
</dbReference>
<dbReference type="GO" id="GO:0030048">
    <property type="term" value="P:actin filament-based movement"/>
    <property type="evidence" value="ECO:0000303"/>
    <property type="project" value="ComplexPortal"/>
</dbReference>
<dbReference type="GO" id="GO:0000132">
    <property type="term" value="P:establishment of mitotic spindle orientation"/>
    <property type="evidence" value="ECO:0000303"/>
    <property type="project" value="ComplexPortal"/>
</dbReference>
<dbReference type="GO" id="GO:0000278">
    <property type="term" value="P:mitotic cell cycle"/>
    <property type="evidence" value="ECO:0000316"/>
    <property type="project" value="SGD"/>
</dbReference>
<dbReference type="Gene3D" id="3.30.420.40">
    <property type="match status" value="1"/>
</dbReference>
<dbReference type="InterPro" id="IPR004000">
    <property type="entry name" value="Actin"/>
</dbReference>
<dbReference type="InterPro" id="IPR043129">
    <property type="entry name" value="ATPase_NBD"/>
</dbReference>
<dbReference type="PANTHER" id="PTHR11937">
    <property type="entry name" value="ACTIN"/>
    <property type="match status" value="1"/>
</dbReference>
<dbReference type="Pfam" id="PF00022">
    <property type="entry name" value="Actin"/>
    <property type="match status" value="1"/>
</dbReference>
<dbReference type="SUPFAM" id="SSF53067">
    <property type="entry name" value="Actin-like ATPase domain"/>
    <property type="match status" value="2"/>
</dbReference>
<gene>
    <name type="primary">ARP10</name>
    <name type="ordered locus">YDR106W</name>
    <name type="ORF">YD8557.15</name>
    <name type="ORF">YD9727.02</name>
</gene>
<sequence>MSNTIVIVYLGANRIEIGRSADACPQEIIAWKTGSINEKNREELKKIFEHYFQICNILGNREVQVLILEDIFISVVEKRIICSILFKEFDCAHVSFVPRAIVHCLSCNTRNAIVIDIGTNYTTCVPIFDLRPLQQFIKYSKRGKRQVESRIPLPGSLYMPIFFDEEYNSKNCEVDETPVINLVKNIVESLPIDLRRPLRENIIIVNIEEAYETVIRNLFKLKMDTSKIQFPKNYWQAGSACAKILLHYKGSNIVGIERDEFYNNPHIAPDWFDYYFRTGVKRLQ</sequence>
<evidence type="ECO:0000250" key="1"/>
<evidence type="ECO:0000269" key="2">
    <source>
    </source>
</evidence>
<evidence type="ECO:0000305" key="3"/>
<reference key="1">
    <citation type="journal article" date="1997" name="Nature">
        <title>The nucleotide sequence of Saccharomyces cerevisiae chromosome IV.</title>
        <authorList>
            <person name="Jacq C."/>
            <person name="Alt-Moerbe J."/>
            <person name="Andre B."/>
            <person name="Arnold W."/>
            <person name="Bahr A."/>
            <person name="Ballesta J.P.G."/>
            <person name="Bargues M."/>
            <person name="Baron L."/>
            <person name="Becker A."/>
            <person name="Biteau N."/>
            <person name="Bloecker H."/>
            <person name="Blugeon C."/>
            <person name="Boskovic J."/>
            <person name="Brandt P."/>
            <person name="Brueckner M."/>
            <person name="Buitrago M.J."/>
            <person name="Coster F."/>
            <person name="Delaveau T."/>
            <person name="del Rey F."/>
            <person name="Dujon B."/>
            <person name="Eide L.G."/>
            <person name="Garcia-Cantalejo J.M."/>
            <person name="Goffeau A."/>
            <person name="Gomez-Peris A."/>
            <person name="Granotier C."/>
            <person name="Hanemann V."/>
            <person name="Hankeln T."/>
            <person name="Hoheisel J.D."/>
            <person name="Jaeger W."/>
            <person name="Jimenez A."/>
            <person name="Jonniaux J.-L."/>
            <person name="Kraemer C."/>
            <person name="Kuester H."/>
            <person name="Laamanen P."/>
            <person name="Legros Y."/>
            <person name="Louis E.J."/>
            <person name="Moeller-Rieker S."/>
            <person name="Monnet A."/>
            <person name="Moro M."/>
            <person name="Mueller-Auer S."/>
            <person name="Nussbaumer B."/>
            <person name="Paricio N."/>
            <person name="Paulin L."/>
            <person name="Perea J."/>
            <person name="Perez-Alonso M."/>
            <person name="Perez-Ortin J.E."/>
            <person name="Pohl T.M."/>
            <person name="Prydz H."/>
            <person name="Purnelle B."/>
            <person name="Rasmussen S.W."/>
            <person name="Remacha M.A."/>
            <person name="Revuelta J.L."/>
            <person name="Rieger M."/>
            <person name="Salom D."/>
            <person name="Saluz H.P."/>
            <person name="Saiz J.E."/>
            <person name="Saren A.-M."/>
            <person name="Schaefer M."/>
            <person name="Scharfe M."/>
            <person name="Schmidt E.R."/>
            <person name="Schneider C."/>
            <person name="Scholler P."/>
            <person name="Schwarz S."/>
            <person name="Soler-Mira A."/>
            <person name="Urrestarazu L.A."/>
            <person name="Verhasselt P."/>
            <person name="Vissers S."/>
            <person name="Voet M."/>
            <person name="Volckaert G."/>
            <person name="Wagner G."/>
            <person name="Wambutt R."/>
            <person name="Wedler E."/>
            <person name="Wedler H."/>
            <person name="Woelfl S."/>
            <person name="Harris D.E."/>
            <person name="Bowman S."/>
            <person name="Brown D."/>
            <person name="Churcher C.M."/>
            <person name="Connor R."/>
            <person name="Dedman K."/>
            <person name="Gentles S."/>
            <person name="Hamlin N."/>
            <person name="Hunt S."/>
            <person name="Jones L."/>
            <person name="McDonald S."/>
            <person name="Murphy L.D."/>
            <person name="Niblett D."/>
            <person name="Odell C."/>
            <person name="Oliver K."/>
            <person name="Rajandream M.A."/>
            <person name="Richards C."/>
            <person name="Shore L."/>
            <person name="Walsh S.V."/>
            <person name="Barrell B.G."/>
            <person name="Dietrich F.S."/>
            <person name="Mulligan J.T."/>
            <person name="Allen E."/>
            <person name="Araujo R."/>
            <person name="Aviles E."/>
            <person name="Berno A."/>
            <person name="Carpenter J."/>
            <person name="Chen E."/>
            <person name="Cherry J.M."/>
            <person name="Chung E."/>
            <person name="Duncan M."/>
            <person name="Hunicke-Smith S."/>
            <person name="Hyman R.W."/>
            <person name="Komp C."/>
            <person name="Lashkari D."/>
            <person name="Lew H."/>
            <person name="Lin D."/>
            <person name="Mosedale D."/>
            <person name="Nakahara K."/>
            <person name="Namath A."/>
            <person name="Oefner P."/>
            <person name="Oh C."/>
            <person name="Petel F.X."/>
            <person name="Roberts D."/>
            <person name="Schramm S."/>
            <person name="Schroeder M."/>
            <person name="Shogren T."/>
            <person name="Shroff N."/>
            <person name="Winant A."/>
            <person name="Yelton M.A."/>
            <person name="Botstein D."/>
            <person name="Davis R.W."/>
            <person name="Johnston M."/>
            <person name="Andrews S."/>
            <person name="Brinkman R."/>
            <person name="Cooper J."/>
            <person name="Ding H."/>
            <person name="Du Z."/>
            <person name="Favello A."/>
            <person name="Fulton L."/>
            <person name="Gattung S."/>
            <person name="Greco T."/>
            <person name="Hallsworth K."/>
            <person name="Hawkins J."/>
            <person name="Hillier L.W."/>
            <person name="Jier M."/>
            <person name="Johnson D."/>
            <person name="Johnston L."/>
            <person name="Kirsten J."/>
            <person name="Kucaba T."/>
            <person name="Langston Y."/>
            <person name="Latreille P."/>
            <person name="Le T."/>
            <person name="Mardis E."/>
            <person name="Menezes S."/>
            <person name="Miller N."/>
            <person name="Nhan M."/>
            <person name="Pauley A."/>
            <person name="Peluso D."/>
            <person name="Rifkin L."/>
            <person name="Riles L."/>
            <person name="Taich A."/>
            <person name="Trevaskis E."/>
            <person name="Vignati D."/>
            <person name="Wilcox L."/>
            <person name="Wohldman P."/>
            <person name="Vaudin M."/>
            <person name="Wilson R."/>
            <person name="Waterston R."/>
            <person name="Albermann K."/>
            <person name="Hani J."/>
            <person name="Heumann K."/>
            <person name="Kleine K."/>
            <person name="Mewes H.-W."/>
            <person name="Zollner A."/>
            <person name="Zaccaria P."/>
        </authorList>
    </citation>
    <scope>NUCLEOTIDE SEQUENCE [LARGE SCALE GENOMIC DNA]</scope>
    <source>
        <strain>ATCC 204508 / S288c</strain>
    </source>
</reference>
<reference key="2">
    <citation type="journal article" date="2014" name="G3 (Bethesda)">
        <title>The reference genome sequence of Saccharomyces cerevisiae: Then and now.</title>
        <authorList>
            <person name="Engel S.R."/>
            <person name="Dietrich F.S."/>
            <person name="Fisk D.G."/>
            <person name="Binkley G."/>
            <person name="Balakrishnan R."/>
            <person name="Costanzo M.C."/>
            <person name="Dwight S.S."/>
            <person name="Hitz B.C."/>
            <person name="Karra K."/>
            <person name="Nash R.S."/>
            <person name="Weng S."/>
            <person name="Wong E.D."/>
            <person name="Lloyd P."/>
            <person name="Skrzypek M.S."/>
            <person name="Miyasato S.R."/>
            <person name="Simison M."/>
            <person name="Cherry J.M."/>
        </authorList>
    </citation>
    <scope>GENOME REANNOTATION</scope>
    <source>
        <strain>ATCC 204508 / S288c</strain>
    </source>
</reference>
<reference key="3">
    <citation type="journal article" date="2007" name="Genome Res.">
        <title>Approaching a complete repository of sequence-verified protein-encoding clones for Saccharomyces cerevisiae.</title>
        <authorList>
            <person name="Hu Y."/>
            <person name="Rolfs A."/>
            <person name="Bhullar B."/>
            <person name="Murthy T.V.S."/>
            <person name="Zhu C."/>
            <person name="Berger M.F."/>
            <person name="Camargo A.A."/>
            <person name="Kelley F."/>
            <person name="McCarron S."/>
            <person name="Jepson D."/>
            <person name="Richardson A."/>
            <person name="Raphael J."/>
            <person name="Moreira D."/>
            <person name="Taycher E."/>
            <person name="Zuo D."/>
            <person name="Mohr S."/>
            <person name="Kane M.F."/>
            <person name="Williamson J."/>
            <person name="Simpson A.J.G."/>
            <person name="Bulyk M.L."/>
            <person name="Harlow E."/>
            <person name="Marsischky G."/>
            <person name="Kolodner R.D."/>
            <person name="LaBaer J."/>
        </authorList>
    </citation>
    <scope>NUCLEOTIDE SEQUENCE [GENOMIC DNA]</scope>
    <source>
        <strain>ATCC 204508 / S288c</strain>
    </source>
</reference>
<reference key="4">
    <citation type="journal article" date="1997" name="Yeast">
        <title>Who's who among the Saccharomyces cerevisiae actin-related proteins? A classification and nomenclature proposal for a large family.</title>
        <authorList>
            <person name="Poch O."/>
            <person name="Winsor B."/>
        </authorList>
    </citation>
    <scope>GENE NAME</scope>
</reference>
<reference key="5">
    <citation type="journal article" date="2006" name="Mol. Biol. Cell">
        <title>Arp10p is a pointed-end-associated component of yeast dynactin.</title>
        <authorList>
            <person name="Clark S.W."/>
            <person name="Rose M.D."/>
        </authorList>
    </citation>
    <scope>FUNCTION</scope>
    <scope>SELF-ASSOCIATION</scope>
    <scope>INTERACTION WITH ARP1 AND JNM1</scope>
    <scope>IDENTIFICATION IN THE DYNACTIN COMPLEX</scope>
</reference>
<protein>
    <recommendedName>
        <fullName>Actin-like protein ARP10</fullName>
    </recommendedName>
</protein>
<keyword id="KW-0963">Cytoplasm</keyword>
<keyword id="KW-0206">Cytoskeleton</keyword>
<keyword id="KW-0243">Dynein</keyword>
<keyword id="KW-0493">Microtubule</keyword>
<keyword id="KW-1185">Reference proteome</keyword>
<accession>Q04549</accession>
<accession>D6VS92</accession>
<accession>Q03869</accession>
<proteinExistence type="evidence at protein level"/>